<gene>
    <name evidence="1" type="primary">argB</name>
    <name type="ordered locus">A1S_0888</name>
</gene>
<sequence>MPQDQHLGVDKAKILIEALPYIQRFSGKTLVVKYGGNAMTDPELESSFARDIVLLKTVGLNPIVVHGGGPQVDSFLKQLGRESDRIDGMRVTDEATMEVVEMVLGGSVNKSIVNLINKHGGRAIGLTGQDGNLLRARKLLMEKQEEDGSIKHIDLGMVGEVTGVKTDVLEMFTQSDFIPVIAPLGVDEKGNTYNINADLVAGKVAEALGAEKLILLTNISGVLDENKNLLTGLTTQEVDRLIETGVIYGGMIPKVGCALDAVKGGVVSAHIVDGRVPHATLLEIFTDHGVGTLISNRTQTTH</sequence>
<keyword id="KW-0028">Amino-acid biosynthesis</keyword>
<keyword id="KW-0055">Arginine biosynthesis</keyword>
<keyword id="KW-0067">ATP-binding</keyword>
<keyword id="KW-0963">Cytoplasm</keyword>
<keyword id="KW-0418">Kinase</keyword>
<keyword id="KW-0547">Nucleotide-binding</keyword>
<keyword id="KW-0808">Transferase</keyword>
<proteinExistence type="inferred from homology"/>
<comment type="function">
    <text evidence="1">Catalyzes the ATP-dependent phosphorylation of N-acetyl-L-glutamate.</text>
</comment>
<comment type="catalytic activity">
    <reaction evidence="1">
        <text>N-acetyl-L-glutamate + ATP = N-acetyl-L-glutamyl 5-phosphate + ADP</text>
        <dbReference type="Rhea" id="RHEA:14629"/>
        <dbReference type="ChEBI" id="CHEBI:30616"/>
        <dbReference type="ChEBI" id="CHEBI:44337"/>
        <dbReference type="ChEBI" id="CHEBI:57936"/>
        <dbReference type="ChEBI" id="CHEBI:456216"/>
        <dbReference type="EC" id="2.7.2.8"/>
    </reaction>
</comment>
<comment type="pathway">
    <text evidence="1">Amino-acid biosynthesis; L-arginine biosynthesis; N(2)-acetyl-L-ornithine from L-glutamate: step 2/4.</text>
</comment>
<comment type="subcellular location">
    <subcellularLocation>
        <location evidence="1">Cytoplasm</location>
    </subcellularLocation>
</comment>
<comment type="similarity">
    <text evidence="1">Belongs to the acetylglutamate kinase family. ArgB subfamily.</text>
</comment>
<organism>
    <name type="scientific">Acinetobacter baumannii (strain ATCC 17978 / DSM 105126 / CIP 53.77 / LMG 1025 / NCDC KC755 / 5377)</name>
    <dbReference type="NCBI Taxonomy" id="400667"/>
    <lineage>
        <taxon>Bacteria</taxon>
        <taxon>Pseudomonadati</taxon>
        <taxon>Pseudomonadota</taxon>
        <taxon>Gammaproteobacteria</taxon>
        <taxon>Moraxellales</taxon>
        <taxon>Moraxellaceae</taxon>
        <taxon>Acinetobacter</taxon>
        <taxon>Acinetobacter calcoaceticus/baumannii complex</taxon>
    </lineage>
</organism>
<feature type="chain" id="PRO_0000335603" description="Acetylglutamate kinase">
    <location>
        <begin position="1"/>
        <end position="302"/>
    </location>
</feature>
<feature type="binding site" evidence="1">
    <location>
        <begin position="68"/>
        <end position="69"/>
    </location>
    <ligand>
        <name>substrate</name>
    </ligand>
</feature>
<feature type="binding site" evidence="1">
    <location>
        <position position="90"/>
    </location>
    <ligand>
        <name>substrate</name>
    </ligand>
</feature>
<feature type="binding site" evidence="1">
    <location>
        <position position="194"/>
    </location>
    <ligand>
        <name>substrate</name>
    </ligand>
</feature>
<feature type="site" description="Transition state stabilizer" evidence="1">
    <location>
        <position position="33"/>
    </location>
</feature>
<feature type="site" description="Transition state stabilizer" evidence="1">
    <location>
        <position position="254"/>
    </location>
</feature>
<accession>A3M326</accession>
<evidence type="ECO:0000255" key="1">
    <source>
        <dbReference type="HAMAP-Rule" id="MF_00082"/>
    </source>
</evidence>
<protein>
    <recommendedName>
        <fullName evidence="1">Acetylglutamate kinase</fullName>
        <ecNumber evidence="1">2.7.2.8</ecNumber>
    </recommendedName>
    <alternativeName>
        <fullName evidence="1">N-acetyl-L-glutamate 5-phosphotransferase</fullName>
    </alternativeName>
    <alternativeName>
        <fullName evidence="1">NAG kinase</fullName>
        <shortName evidence="1">NAGK</shortName>
    </alternativeName>
</protein>
<name>ARGB_ACIBT</name>
<dbReference type="EC" id="2.7.2.8" evidence="1"/>
<dbReference type="EMBL" id="CP000521">
    <property type="protein sequence ID" value="ABO11320.2"/>
    <property type="molecule type" value="Genomic_DNA"/>
</dbReference>
<dbReference type="RefSeq" id="WP_001135419.1">
    <property type="nucleotide sequence ID" value="NZ_CP053098.1"/>
</dbReference>
<dbReference type="SMR" id="A3M326"/>
<dbReference type="GeneID" id="92892817"/>
<dbReference type="KEGG" id="acb:A1S_0888"/>
<dbReference type="HOGENOM" id="CLU_053680_0_0_6"/>
<dbReference type="UniPathway" id="UPA00068">
    <property type="reaction ID" value="UER00107"/>
</dbReference>
<dbReference type="GO" id="GO:0005737">
    <property type="term" value="C:cytoplasm"/>
    <property type="evidence" value="ECO:0007669"/>
    <property type="project" value="UniProtKB-SubCell"/>
</dbReference>
<dbReference type="GO" id="GO:0003991">
    <property type="term" value="F:acetylglutamate kinase activity"/>
    <property type="evidence" value="ECO:0007669"/>
    <property type="project" value="UniProtKB-UniRule"/>
</dbReference>
<dbReference type="GO" id="GO:0005524">
    <property type="term" value="F:ATP binding"/>
    <property type="evidence" value="ECO:0007669"/>
    <property type="project" value="UniProtKB-UniRule"/>
</dbReference>
<dbReference type="GO" id="GO:0042450">
    <property type="term" value="P:arginine biosynthetic process via ornithine"/>
    <property type="evidence" value="ECO:0007669"/>
    <property type="project" value="UniProtKB-UniRule"/>
</dbReference>
<dbReference type="GO" id="GO:0006526">
    <property type="term" value="P:L-arginine biosynthetic process"/>
    <property type="evidence" value="ECO:0007669"/>
    <property type="project" value="UniProtKB-UniPathway"/>
</dbReference>
<dbReference type="CDD" id="cd04250">
    <property type="entry name" value="AAK_NAGK-C"/>
    <property type="match status" value="1"/>
</dbReference>
<dbReference type="FunFam" id="3.40.1160.10:FF:000004">
    <property type="entry name" value="Acetylglutamate kinase"/>
    <property type="match status" value="1"/>
</dbReference>
<dbReference type="Gene3D" id="3.40.1160.10">
    <property type="entry name" value="Acetylglutamate kinase-like"/>
    <property type="match status" value="1"/>
</dbReference>
<dbReference type="HAMAP" id="MF_00082">
    <property type="entry name" value="ArgB"/>
    <property type="match status" value="1"/>
</dbReference>
<dbReference type="InterPro" id="IPR036393">
    <property type="entry name" value="AceGlu_kinase-like_sf"/>
</dbReference>
<dbReference type="InterPro" id="IPR004662">
    <property type="entry name" value="AcgluKinase_fam"/>
</dbReference>
<dbReference type="InterPro" id="IPR037528">
    <property type="entry name" value="ArgB"/>
</dbReference>
<dbReference type="InterPro" id="IPR001048">
    <property type="entry name" value="Asp/Glu/Uridylate_kinase"/>
</dbReference>
<dbReference type="InterPro" id="IPR041727">
    <property type="entry name" value="NAGK-C"/>
</dbReference>
<dbReference type="NCBIfam" id="TIGR00761">
    <property type="entry name" value="argB"/>
    <property type="match status" value="1"/>
</dbReference>
<dbReference type="PANTHER" id="PTHR23342">
    <property type="entry name" value="N-ACETYLGLUTAMATE SYNTHASE"/>
    <property type="match status" value="1"/>
</dbReference>
<dbReference type="PANTHER" id="PTHR23342:SF0">
    <property type="entry name" value="N-ACETYLGLUTAMATE SYNTHASE, MITOCHONDRIAL"/>
    <property type="match status" value="1"/>
</dbReference>
<dbReference type="Pfam" id="PF00696">
    <property type="entry name" value="AA_kinase"/>
    <property type="match status" value="1"/>
</dbReference>
<dbReference type="PIRSF" id="PIRSF000728">
    <property type="entry name" value="NAGK"/>
    <property type="match status" value="1"/>
</dbReference>
<dbReference type="SUPFAM" id="SSF53633">
    <property type="entry name" value="Carbamate kinase-like"/>
    <property type="match status" value="1"/>
</dbReference>
<reference key="1">
    <citation type="journal article" date="2007" name="Genes Dev.">
        <title>New insights into Acinetobacter baumannii pathogenesis revealed by high-density pyrosequencing and transposon mutagenesis.</title>
        <authorList>
            <person name="Smith M.G."/>
            <person name="Gianoulis T.A."/>
            <person name="Pukatzki S."/>
            <person name="Mekalanos J.J."/>
            <person name="Ornston L.N."/>
            <person name="Gerstein M."/>
            <person name="Snyder M."/>
        </authorList>
    </citation>
    <scope>NUCLEOTIDE SEQUENCE [LARGE SCALE GENOMIC DNA]</scope>
    <source>
        <strain>ATCC 17978 / DSM 105126 / CIP 53.77 / LMG 1025 / NCDC KC755 / 5377</strain>
    </source>
</reference>